<protein>
    <recommendedName>
        <fullName evidence="1">Glutamate--tRNA ligase</fullName>
        <ecNumber evidence="1">6.1.1.17</ecNumber>
    </recommendedName>
    <alternativeName>
        <fullName evidence="1">Glutamyl-tRNA synthetase</fullName>
        <shortName evidence="1">GluRS</shortName>
    </alternativeName>
</protein>
<proteinExistence type="inferred from homology"/>
<reference key="1">
    <citation type="journal article" date="2008" name="J. Bacteriol.">
        <title>Genome sequence of a nephritogenic and highly transformable M49 strain of Streptococcus pyogenes.</title>
        <authorList>
            <person name="McShan W.M."/>
            <person name="Ferretti J.J."/>
            <person name="Karasawa T."/>
            <person name="Suvorov A.N."/>
            <person name="Lin S."/>
            <person name="Qin B."/>
            <person name="Jia H."/>
            <person name="Kenton S."/>
            <person name="Najar F."/>
            <person name="Wu H."/>
            <person name="Scott J."/>
            <person name="Roe B.A."/>
            <person name="Savic D.J."/>
        </authorList>
    </citation>
    <scope>NUCLEOTIDE SEQUENCE [LARGE SCALE GENOMIC DNA]</scope>
    <source>
        <strain>NZ131</strain>
    </source>
</reference>
<comment type="function">
    <text evidence="1">Catalyzes the attachment of glutamate to tRNA(Glu) in a two-step reaction: glutamate is first activated by ATP to form Glu-AMP and then transferred to the acceptor end of tRNA(Glu).</text>
</comment>
<comment type="catalytic activity">
    <reaction evidence="1">
        <text>tRNA(Glu) + L-glutamate + ATP = L-glutamyl-tRNA(Glu) + AMP + diphosphate</text>
        <dbReference type="Rhea" id="RHEA:23540"/>
        <dbReference type="Rhea" id="RHEA-COMP:9663"/>
        <dbReference type="Rhea" id="RHEA-COMP:9680"/>
        <dbReference type="ChEBI" id="CHEBI:29985"/>
        <dbReference type="ChEBI" id="CHEBI:30616"/>
        <dbReference type="ChEBI" id="CHEBI:33019"/>
        <dbReference type="ChEBI" id="CHEBI:78442"/>
        <dbReference type="ChEBI" id="CHEBI:78520"/>
        <dbReference type="ChEBI" id="CHEBI:456215"/>
        <dbReference type="EC" id="6.1.1.17"/>
    </reaction>
</comment>
<comment type="subunit">
    <text evidence="1">Monomer.</text>
</comment>
<comment type="subcellular location">
    <subcellularLocation>
        <location evidence="1">Cytoplasm</location>
    </subcellularLocation>
</comment>
<comment type="similarity">
    <text evidence="1">Belongs to the class-I aminoacyl-tRNA synthetase family. Glutamate--tRNA ligase type 1 subfamily.</text>
</comment>
<dbReference type="EC" id="6.1.1.17" evidence="1"/>
<dbReference type="EMBL" id="CP000829">
    <property type="protein sequence ID" value="ACI60545.1"/>
    <property type="molecule type" value="Genomic_DNA"/>
</dbReference>
<dbReference type="SMR" id="B5XJN3"/>
<dbReference type="KEGG" id="soz:Spy49_0203"/>
<dbReference type="HOGENOM" id="CLU_015768_6_1_9"/>
<dbReference type="Proteomes" id="UP000001039">
    <property type="component" value="Chromosome"/>
</dbReference>
<dbReference type="GO" id="GO:0005829">
    <property type="term" value="C:cytosol"/>
    <property type="evidence" value="ECO:0007669"/>
    <property type="project" value="TreeGrafter"/>
</dbReference>
<dbReference type="GO" id="GO:0005524">
    <property type="term" value="F:ATP binding"/>
    <property type="evidence" value="ECO:0007669"/>
    <property type="project" value="UniProtKB-UniRule"/>
</dbReference>
<dbReference type="GO" id="GO:0004818">
    <property type="term" value="F:glutamate-tRNA ligase activity"/>
    <property type="evidence" value="ECO:0007669"/>
    <property type="project" value="UniProtKB-UniRule"/>
</dbReference>
<dbReference type="GO" id="GO:0000049">
    <property type="term" value="F:tRNA binding"/>
    <property type="evidence" value="ECO:0007669"/>
    <property type="project" value="InterPro"/>
</dbReference>
<dbReference type="GO" id="GO:0008270">
    <property type="term" value="F:zinc ion binding"/>
    <property type="evidence" value="ECO:0007669"/>
    <property type="project" value="InterPro"/>
</dbReference>
<dbReference type="GO" id="GO:0006424">
    <property type="term" value="P:glutamyl-tRNA aminoacylation"/>
    <property type="evidence" value="ECO:0007669"/>
    <property type="project" value="UniProtKB-UniRule"/>
</dbReference>
<dbReference type="CDD" id="cd00808">
    <property type="entry name" value="GluRS_core"/>
    <property type="match status" value="1"/>
</dbReference>
<dbReference type="FunFam" id="1.10.10.350:FF:000002">
    <property type="entry name" value="Glutamate--tRNA ligase"/>
    <property type="match status" value="1"/>
</dbReference>
<dbReference type="FunFam" id="3.40.50.620:FF:000007">
    <property type="entry name" value="Glutamate--tRNA ligase"/>
    <property type="match status" value="1"/>
</dbReference>
<dbReference type="Gene3D" id="1.10.10.350">
    <property type="match status" value="1"/>
</dbReference>
<dbReference type="Gene3D" id="3.40.50.620">
    <property type="entry name" value="HUPs"/>
    <property type="match status" value="1"/>
</dbReference>
<dbReference type="HAMAP" id="MF_00022">
    <property type="entry name" value="Glu_tRNA_synth_type1"/>
    <property type="match status" value="1"/>
</dbReference>
<dbReference type="InterPro" id="IPR045462">
    <property type="entry name" value="aa-tRNA-synth_I_cd-bd"/>
</dbReference>
<dbReference type="InterPro" id="IPR020751">
    <property type="entry name" value="aa-tRNA-synth_I_codon-bd_sub2"/>
</dbReference>
<dbReference type="InterPro" id="IPR001412">
    <property type="entry name" value="aa-tRNA-synth_I_CS"/>
</dbReference>
<dbReference type="InterPro" id="IPR008925">
    <property type="entry name" value="aa_tRNA-synth_I_cd-bd_sf"/>
</dbReference>
<dbReference type="InterPro" id="IPR004527">
    <property type="entry name" value="Glu-tRNA-ligase_bac/mito"/>
</dbReference>
<dbReference type="InterPro" id="IPR000924">
    <property type="entry name" value="Glu/Gln-tRNA-synth"/>
</dbReference>
<dbReference type="InterPro" id="IPR020058">
    <property type="entry name" value="Glu/Gln-tRNA-synth_Ib_cat-dom"/>
</dbReference>
<dbReference type="InterPro" id="IPR049940">
    <property type="entry name" value="GluQ/Sye"/>
</dbReference>
<dbReference type="InterPro" id="IPR033910">
    <property type="entry name" value="GluRS_core"/>
</dbReference>
<dbReference type="InterPro" id="IPR014729">
    <property type="entry name" value="Rossmann-like_a/b/a_fold"/>
</dbReference>
<dbReference type="NCBIfam" id="TIGR00464">
    <property type="entry name" value="gltX_bact"/>
    <property type="match status" value="1"/>
</dbReference>
<dbReference type="PANTHER" id="PTHR43311">
    <property type="entry name" value="GLUTAMATE--TRNA LIGASE"/>
    <property type="match status" value="1"/>
</dbReference>
<dbReference type="PANTHER" id="PTHR43311:SF2">
    <property type="entry name" value="GLUTAMATE--TRNA LIGASE, MITOCHONDRIAL-RELATED"/>
    <property type="match status" value="1"/>
</dbReference>
<dbReference type="Pfam" id="PF19269">
    <property type="entry name" value="Anticodon_2"/>
    <property type="match status" value="1"/>
</dbReference>
<dbReference type="Pfam" id="PF00749">
    <property type="entry name" value="tRNA-synt_1c"/>
    <property type="match status" value="1"/>
</dbReference>
<dbReference type="PRINTS" id="PR00987">
    <property type="entry name" value="TRNASYNTHGLU"/>
</dbReference>
<dbReference type="SUPFAM" id="SSF48163">
    <property type="entry name" value="An anticodon-binding domain of class I aminoacyl-tRNA synthetases"/>
    <property type="match status" value="1"/>
</dbReference>
<dbReference type="SUPFAM" id="SSF52374">
    <property type="entry name" value="Nucleotidylyl transferase"/>
    <property type="match status" value="1"/>
</dbReference>
<dbReference type="PROSITE" id="PS00178">
    <property type="entry name" value="AA_TRNA_LIGASE_I"/>
    <property type="match status" value="1"/>
</dbReference>
<feature type="chain" id="PRO_1000090115" description="Glutamate--tRNA ligase">
    <location>
        <begin position="1"/>
        <end position="496"/>
    </location>
</feature>
<feature type="short sequence motif" description="'HIGH' region" evidence="1">
    <location>
        <begin position="11"/>
        <end position="21"/>
    </location>
</feature>
<feature type="short sequence motif" description="'KMSKS' region" evidence="1">
    <location>
        <begin position="255"/>
        <end position="259"/>
    </location>
</feature>
<feature type="binding site" evidence="1">
    <location>
        <position position="258"/>
    </location>
    <ligand>
        <name>ATP</name>
        <dbReference type="ChEBI" id="CHEBI:30616"/>
    </ligand>
</feature>
<evidence type="ECO:0000255" key="1">
    <source>
        <dbReference type="HAMAP-Rule" id="MF_00022"/>
    </source>
</evidence>
<sequence length="496" mass="56858">MSKPIRVRYAPSPTGLLHIGNARTALFNYLYARRHGGTFIIRIEDTDRKRHVEDGERSQLENLKWLGMDWDESPETHENYRQSERLALYQQYIDQLLAEGKAYKSYVTEEELAAERERQEAAGETPRYINEFIGMSADEKAKYIAEREAAGIVPTVRLAVNESGIYKWTDMVKGDIEFEGGNIGGDWVIQKKDGYPTYNFAVVVDDHDMQISHVIRGDDHIANTPKQLMVYEALGWEAPEFGHMTLIINSETGKKLSKRDTNTLQFIEDYRKKGYMPEAVFNFIALLGWNPGGEEEIFSREQLIALFDENRLSKSPAAFDQKKMDWMSNEYLKHADFETVYALCKPFLEEAGRLTEKAEKLVELYKPQLKSADEIIPLTDLFFSDFPELTEAEKEVMAGETVSTVLQAFKAKLEAMSDEDFKPENIFPQIKAVQKETGIKGKNLFMPIRIAVSGEMHGPELPNTIYLLGRDKSIEHIKNHAIRLYRSPLFLNALRS</sequence>
<organism>
    <name type="scientific">Streptococcus pyogenes serotype M49 (strain NZ131)</name>
    <dbReference type="NCBI Taxonomy" id="471876"/>
    <lineage>
        <taxon>Bacteria</taxon>
        <taxon>Bacillati</taxon>
        <taxon>Bacillota</taxon>
        <taxon>Bacilli</taxon>
        <taxon>Lactobacillales</taxon>
        <taxon>Streptococcaceae</taxon>
        <taxon>Streptococcus</taxon>
    </lineage>
</organism>
<accession>B5XJN3</accession>
<name>SYE_STRPZ</name>
<gene>
    <name evidence="1" type="primary">gltX</name>
    <name type="ordered locus">Spy49_0203</name>
</gene>
<keyword id="KW-0030">Aminoacyl-tRNA synthetase</keyword>
<keyword id="KW-0067">ATP-binding</keyword>
<keyword id="KW-0963">Cytoplasm</keyword>
<keyword id="KW-0436">Ligase</keyword>
<keyword id="KW-0547">Nucleotide-binding</keyword>
<keyword id="KW-0648">Protein biosynthesis</keyword>